<comment type="subcellular location">
    <subcellularLocation>
        <location evidence="1">Secreted</location>
    </subcellularLocation>
</comment>
<comment type="alternative products">
    <event type="alternative splicing"/>
    <isoform>
        <id>Q8L7G7-1</id>
        <name>1</name>
        <sequence type="displayed"/>
    </isoform>
    <isoform>
        <id>Q8L7G7-2</id>
        <name>2</name>
        <sequence type="described" ref="VSP_037704"/>
    </isoform>
</comment>
<comment type="miscellaneous">
    <molecule>Isoform 2</molecule>
    <text evidence="4">May be due to a competing acceptor splice site.</text>
</comment>
<comment type="similarity">
    <text evidence="4">Belongs to the DEFL family.</text>
</comment>
<comment type="sequence caution" evidence="4">
    <conflict type="erroneous gene model prediction">
        <sequence resource="EMBL-CDS" id="CAA16773"/>
    </conflict>
    <text>The predicted gene has been split into 2 genes: At4g22230 and At4g22235.</text>
</comment>
<comment type="sequence caution" evidence="4">
    <conflict type="erroneous gene model prediction">
        <sequence resource="EMBL-CDS" id="CAB79178"/>
    </conflict>
    <text>The predicted gene has been split into 2 genes: At4g22230 and At4g22235.</text>
</comment>
<dbReference type="EMBL" id="AL021712">
    <property type="protein sequence ID" value="CAA16773.1"/>
    <property type="status" value="ALT_SEQ"/>
    <property type="molecule type" value="Genomic_DNA"/>
</dbReference>
<dbReference type="EMBL" id="AL161556">
    <property type="protein sequence ID" value="CAB79178.1"/>
    <property type="status" value="ALT_SEQ"/>
    <property type="molecule type" value="Genomic_DNA"/>
</dbReference>
<dbReference type="EMBL" id="CP002687">
    <property type="protein sequence ID" value="AEE84577.1"/>
    <property type="molecule type" value="Genomic_DNA"/>
</dbReference>
<dbReference type="EMBL" id="CP002687">
    <property type="protein sequence ID" value="AEE84578.1"/>
    <property type="molecule type" value="Genomic_DNA"/>
</dbReference>
<dbReference type="EMBL" id="AY133713">
    <property type="protein sequence ID" value="AAM91647.1"/>
    <property type="molecule type" value="mRNA"/>
</dbReference>
<dbReference type="EMBL" id="BT001109">
    <property type="protein sequence ID" value="AAN64173.1"/>
    <property type="molecule type" value="mRNA"/>
</dbReference>
<dbReference type="PIR" id="T04904">
    <property type="entry name" value="T04904"/>
</dbReference>
<dbReference type="RefSeq" id="NP_567656.1">
    <molecule id="Q8L7G7-1"/>
    <property type="nucleotide sequence ID" value="NM_118348.3"/>
</dbReference>
<dbReference type="RefSeq" id="NP_849420.1">
    <molecule id="Q8L7G7-2"/>
    <property type="nucleotide sequence ID" value="NM_179089.2"/>
</dbReference>
<dbReference type="PaxDb" id="3702-AT4G22230.1"/>
<dbReference type="ProteomicsDB" id="224599">
    <molecule id="Q8L7G7-1"/>
</dbReference>
<dbReference type="EnsemblPlants" id="AT4G22230.1">
    <molecule id="Q8L7G7-1"/>
    <property type="protein sequence ID" value="AT4G22230.1"/>
    <property type="gene ID" value="AT4G22230"/>
</dbReference>
<dbReference type="EnsemblPlants" id="AT4G22230.2">
    <molecule id="Q8L7G7-2"/>
    <property type="protein sequence ID" value="AT4G22230.2"/>
    <property type="gene ID" value="AT4G22230"/>
</dbReference>
<dbReference type="GeneID" id="828317"/>
<dbReference type="Gramene" id="AT4G22230.1">
    <molecule id="Q8L7G7-1"/>
    <property type="protein sequence ID" value="AT4G22230.1"/>
    <property type="gene ID" value="AT4G22230"/>
</dbReference>
<dbReference type="Gramene" id="AT4G22230.2">
    <molecule id="Q8L7G7-2"/>
    <property type="protein sequence ID" value="AT4G22230.2"/>
    <property type="gene ID" value="AT4G22230"/>
</dbReference>
<dbReference type="KEGG" id="ath:AT4G22230"/>
<dbReference type="Araport" id="AT4G22230"/>
<dbReference type="TAIR" id="AT4G22230"/>
<dbReference type="HOGENOM" id="CLU_2416305_0_0_1"/>
<dbReference type="InParanoid" id="Q8L7G7"/>
<dbReference type="PhylomeDB" id="Q8L7G7"/>
<dbReference type="PRO" id="PR:Q8L7G7"/>
<dbReference type="Proteomes" id="UP000006548">
    <property type="component" value="Chromosome 4"/>
</dbReference>
<dbReference type="ExpressionAtlas" id="Q8L7G7">
    <property type="expression patterns" value="baseline and differential"/>
</dbReference>
<dbReference type="GO" id="GO:0005576">
    <property type="term" value="C:extracellular region"/>
    <property type="evidence" value="ECO:0007669"/>
    <property type="project" value="UniProtKB-SubCell"/>
</dbReference>
<dbReference type="GO" id="GO:0050832">
    <property type="term" value="P:defense response to fungus"/>
    <property type="evidence" value="ECO:0007669"/>
    <property type="project" value="UniProtKB-KW"/>
</dbReference>
<dbReference type="GO" id="GO:0031640">
    <property type="term" value="P:killing of cells of another organism"/>
    <property type="evidence" value="ECO:0007669"/>
    <property type="project" value="UniProtKB-KW"/>
</dbReference>
<dbReference type="InterPro" id="IPR010851">
    <property type="entry name" value="DEFL"/>
</dbReference>
<dbReference type="Pfam" id="PF25052">
    <property type="entry name" value="AtDEF-like"/>
    <property type="match status" value="1"/>
</dbReference>
<accession>Q8L7G7</accession>
<accession>O49628</accession>
<accession>Q8H0Y6</accession>
<organism>
    <name type="scientific">Arabidopsis thaliana</name>
    <name type="common">Mouse-ear cress</name>
    <dbReference type="NCBI Taxonomy" id="3702"/>
    <lineage>
        <taxon>Eukaryota</taxon>
        <taxon>Viridiplantae</taxon>
        <taxon>Streptophyta</taxon>
        <taxon>Embryophyta</taxon>
        <taxon>Tracheophyta</taxon>
        <taxon>Spermatophyta</taxon>
        <taxon>Magnoliopsida</taxon>
        <taxon>eudicotyledons</taxon>
        <taxon>Gunneridae</taxon>
        <taxon>Pentapetalae</taxon>
        <taxon>rosids</taxon>
        <taxon>malvids</taxon>
        <taxon>Brassicales</taxon>
        <taxon>Brassicaceae</taxon>
        <taxon>Camelineae</taxon>
        <taxon>Arabidopsis</taxon>
    </lineage>
</organism>
<proteinExistence type="inferred from homology"/>
<sequence length="92" mass="9823">MGSLRLSTVAIAVVVCLSILLISPTEVDGRQVCDYDKGECNSYEKSSTCIEPCKQLDSKFIGGRCIPVGGITGMGLCVCCRDVQRGAEKESM</sequence>
<evidence type="ECO:0000250" key="1"/>
<evidence type="ECO:0000255" key="2"/>
<evidence type="ECO:0000303" key="3">
    <source>
    </source>
</evidence>
<evidence type="ECO:0000305" key="4"/>
<keyword id="KW-0025">Alternative splicing</keyword>
<keyword id="KW-0929">Antimicrobial</keyword>
<keyword id="KW-1015">Disulfide bond</keyword>
<keyword id="KW-0295">Fungicide</keyword>
<keyword id="KW-0611">Plant defense</keyword>
<keyword id="KW-1185">Reference proteome</keyword>
<keyword id="KW-0964">Secreted</keyword>
<keyword id="KW-0732">Signal</keyword>
<feature type="signal peptide" evidence="2">
    <location>
        <begin position="1"/>
        <end position="29"/>
    </location>
</feature>
<feature type="chain" id="PRO_0000379660" description="Defensin-like protein 96">
    <location>
        <begin position="30"/>
        <end position="92"/>
    </location>
</feature>
<feature type="disulfide bond" evidence="1">
    <location>
        <begin position="33"/>
        <end position="80"/>
    </location>
</feature>
<feature type="disulfide bond" evidence="1">
    <location>
        <begin position="40"/>
        <end position="65"/>
    </location>
</feature>
<feature type="disulfide bond" evidence="1">
    <location>
        <begin position="49"/>
        <end position="77"/>
    </location>
</feature>
<feature type="disulfide bond" evidence="1">
    <location>
        <begin position="53"/>
        <end position="79"/>
    </location>
</feature>
<feature type="splice variant" id="VSP_037704" description="In isoform 2." evidence="3">
    <location>
        <position position="26"/>
    </location>
</feature>
<name>DEF96_ARATH</name>
<reference key="1">
    <citation type="journal article" date="1999" name="Nature">
        <title>Sequence and analysis of chromosome 4 of the plant Arabidopsis thaliana.</title>
        <authorList>
            <person name="Mayer K.F.X."/>
            <person name="Schueller C."/>
            <person name="Wambutt R."/>
            <person name="Murphy G."/>
            <person name="Volckaert G."/>
            <person name="Pohl T."/>
            <person name="Duesterhoeft A."/>
            <person name="Stiekema W."/>
            <person name="Entian K.-D."/>
            <person name="Terryn N."/>
            <person name="Harris B."/>
            <person name="Ansorge W."/>
            <person name="Brandt P."/>
            <person name="Grivell L.A."/>
            <person name="Rieger M."/>
            <person name="Weichselgartner M."/>
            <person name="de Simone V."/>
            <person name="Obermaier B."/>
            <person name="Mache R."/>
            <person name="Mueller M."/>
            <person name="Kreis M."/>
            <person name="Delseny M."/>
            <person name="Puigdomenech P."/>
            <person name="Watson M."/>
            <person name="Schmidtheini T."/>
            <person name="Reichert B."/>
            <person name="Portetelle D."/>
            <person name="Perez-Alonso M."/>
            <person name="Boutry M."/>
            <person name="Bancroft I."/>
            <person name="Vos P."/>
            <person name="Hoheisel J."/>
            <person name="Zimmermann W."/>
            <person name="Wedler H."/>
            <person name="Ridley P."/>
            <person name="Langham S.-A."/>
            <person name="McCullagh B."/>
            <person name="Bilham L."/>
            <person name="Robben J."/>
            <person name="van der Schueren J."/>
            <person name="Grymonprez B."/>
            <person name="Chuang Y.-J."/>
            <person name="Vandenbussche F."/>
            <person name="Braeken M."/>
            <person name="Weltjens I."/>
            <person name="Voet M."/>
            <person name="Bastiaens I."/>
            <person name="Aert R."/>
            <person name="Defoor E."/>
            <person name="Weitzenegger T."/>
            <person name="Bothe G."/>
            <person name="Ramsperger U."/>
            <person name="Hilbert H."/>
            <person name="Braun M."/>
            <person name="Holzer E."/>
            <person name="Brandt A."/>
            <person name="Peters S."/>
            <person name="van Staveren M."/>
            <person name="Dirkse W."/>
            <person name="Mooijman P."/>
            <person name="Klein Lankhorst R."/>
            <person name="Rose M."/>
            <person name="Hauf J."/>
            <person name="Koetter P."/>
            <person name="Berneiser S."/>
            <person name="Hempel S."/>
            <person name="Feldpausch M."/>
            <person name="Lamberth S."/>
            <person name="Van den Daele H."/>
            <person name="De Keyser A."/>
            <person name="Buysshaert C."/>
            <person name="Gielen J."/>
            <person name="Villarroel R."/>
            <person name="De Clercq R."/>
            <person name="van Montagu M."/>
            <person name="Rogers J."/>
            <person name="Cronin A."/>
            <person name="Quail M.A."/>
            <person name="Bray-Allen S."/>
            <person name="Clark L."/>
            <person name="Doggett J."/>
            <person name="Hall S."/>
            <person name="Kay M."/>
            <person name="Lennard N."/>
            <person name="McLay K."/>
            <person name="Mayes R."/>
            <person name="Pettett A."/>
            <person name="Rajandream M.A."/>
            <person name="Lyne M."/>
            <person name="Benes V."/>
            <person name="Rechmann S."/>
            <person name="Borkova D."/>
            <person name="Bloecker H."/>
            <person name="Scharfe M."/>
            <person name="Grimm M."/>
            <person name="Loehnert T.-H."/>
            <person name="Dose S."/>
            <person name="de Haan M."/>
            <person name="Maarse A.C."/>
            <person name="Schaefer M."/>
            <person name="Mueller-Auer S."/>
            <person name="Gabel C."/>
            <person name="Fuchs M."/>
            <person name="Fartmann B."/>
            <person name="Granderath K."/>
            <person name="Dauner D."/>
            <person name="Herzl A."/>
            <person name="Neumann S."/>
            <person name="Argiriou A."/>
            <person name="Vitale D."/>
            <person name="Liguori R."/>
            <person name="Piravandi E."/>
            <person name="Massenet O."/>
            <person name="Quigley F."/>
            <person name="Clabauld G."/>
            <person name="Muendlein A."/>
            <person name="Felber R."/>
            <person name="Schnabl S."/>
            <person name="Hiller R."/>
            <person name="Schmidt W."/>
            <person name="Lecharny A."/>
            <person name="Aubourg S."/>
            <person name="Chefdor F."/>
            <person name="Cooke R."/>
            <person name="Berger C."/>
            <person name="Monfort A."/>
            <person name="Casacuberta E."/>
            <person name="Gibbons T."/>
            <person name="Weber N."/>
            <person name="Vandenbol M."/>
            <person name="Bargues M."/>
            <person name="Terol J."/>
            <person name="Torres A."/>
            <person name="Perez-Perez A."/>
            <person name="Purnelle B."/>
            <person name="Bent E."/>
            <person name="Johnson S."/>
            <person name="Tacon D."/>
            <person name="Jesse T."/>
            <person name="Heijnen L."/>
            <person name="Schwarz S."/>
            <person name="Scholler P."/>
            <person name="Heber S."/>
            <person name="Francs P."/>
            <person name="Bielke C."/>
            <person name="Frishman D."/>
            <person name="Haase D."/>
            <person name="Lemcke K."/>
            <person name="Mewes H.-W."/>
            <person name="Stocker S."/>
            <person name="Zaccaria P."/>
            <person name="Bevan M."/>
            <person name="Wilson R.K."/>
            <person name="de la Bastide M."/>
            <person name="Habermann K."/>
            <person name="Parnell L."/>
            <person name="Dedhia N."/>
            <person name="Gnoj L."/>
            <person name="Schutz K."/>
            <person name="Huang E."/>
            <person name="Spiegel L."/>
            <person name="Sekhon M."/>
            <person name="Murray J."/>
            <person name="Sheet P."/>
            <person name="Cordes M."/>
            <person name="Abu-Threideh J."/>
            <person name="Stoneking T."/>
            <person name="Kalicki J."/>
            <person name="Graves T."/>
            <person name="Harmon G."/>
            <person name="Edwards J."/>
            <person name="Latreille P."/>
            <person name="Courtney L."/>
            <person name="Cloud J."/>
            <person name="Abbott A."/>
            <person name="Scott K."/>
            <person name="Johnson D."/>
            <person name="Minx P."/>
            <person name="Bentley D."/>
            <person name="Fulton B."/>
            <person name="Miller N."/>
            <person name="Greco T."/>
            <person name="Kemp K."/>
            <person name="Kramer J."/>
            <person name="Fulton L."/>
            <person name="Mardis E."/>
            <person name="Dante M."/>
            <person name="Pepin K."/>
            <person name="Hillier L.W."/>
            <person name="Nelson J."/>
            <person name="Spieth J."/>
            <person name="Ryan E."/>
            <person name="Andrews S."/>
            <person name="Geisel C."/>
            <person name="Layman D."/>
            <person name="Du H."/>
            <person name="Ali J."/>
            <person name="Berghoff A."/>
            <person name="Jones K."/>
            <person name="Drone K."/>
            <person name="Cotton M."/>
            <person name="Joshu C."/>
            <person name="Antonoiu B."/>
            <person name="Zidanic M."/>
            <person name="Strong C."/>
            <person name="Sun H."/>
            <person name="Lamar B."/>
            <person name="Yordan C."/>
            <person name="Ma P."/>
            <person name="Zhong J."/>
            <person name="Preston R."/>
            <person name="Vil D."/>
            <person name="Shekher M."/>
            <person name="Matero A."/>
            <person name="Shah R."/>
            <person name="Swaby I.K."/>
            <person name="O'Shaughnessy A."/>
            <person name="Rodriguez M."/>
            <person name="Hoffman J."/>
            <person name="Till S."/>
            <person name="Granat S."/>
            <person name="Shohdy N."/>
            <person name="Hasegawa A."/>
            <person name="Hameed A."/>
            <person name="Lodhi M."/>
            <person name="Johnson A."/>
            <person name="Chen E."/>
            <person name="Marra M.A."/>
            <person name="Martienssen R."/>
            <person name="McCombie W.R."/>
        </authorList>
    </citation>
    <scope>NUCLEOTIDE SEQUENCE [LARGE SCALE GENOMIC DNA]</scope>
    <source>
        <strain>cv. Columbia</strain>
    </source>
</reference>
<reference key="2">
    <citation type="journal article" date="2017" name="Plant J.">
        <title>Araport11: a complete reannotation of the Arabidopsis thaliana reference genome.</title>
        <authorList>
            <person name="Cheng C.Y."/>
            <person name="Krishnakumar V."/>
            <person name="Chan A.P."/>
            <person name="Thibaud-Nissen F."/>
            <person name="Schobel S."/>
            <person name="Town C.D."/>
        </authorList>
    </citation>
    <scope>GENOME REANNOTATION</scope>
    <source>
        <strain>cv. Columbia</strain>
    </source>
</reference>
<reference key="3">
    <citation type="journal article" date="2003" name="Science">
        <title>Empirical analysis of transcriptional activity in the Arabidopsis genome.</title>
        <authorList>
            <person name="Yamada K."/>
            <person name="Lim J."/>
            <person name="Dale J.M."/>
            <person name="Chen H."/>
            <person name="Shinn P."/>
            <person name="Palm C.J."/>
            <person name="Southwick A.M."/>
            <person name="Wu H.C."/>
            <person name="Kim C.J."/>
            <person name="Nguyen M."/>
            <person name="Pham P.K."/>
            <person name="Cheuk R.F."/>
            <person name="Karlin-Newmann G."/>
            <person name="Liu S.X."/>
            <person name="Lam B."/>
            <person name="Sakano H."/>
            <person name="Wu T."/>
            <person name="Yu G."/>
            <person name="Miranda M."/>
            <person name="Quach H.L."/>
            <person name="Tripp M."/>
            <person name="Chang C.H."/>
            <person name="Lee J.M."/>
            <person name="Toriumi M.J."/>
            <person name="Chan M.M."/>
            <person name="Tang C.C."/>
            <person name="Onodera C.S."/>
            <person name="Deng J.M."/>
            <person name="Akiyama K."/>
            <person name="Ansari Y."/>
            <person name="Arakawa T."/>
            <person name="Banh J."/>
            <person name="Banno F."/>
            <person name="Bowser L."/>
            <person name="Brooks S.Y."/>
            <person name="Carninci P."/>
            <person name="Chao Q."/>
            <person name="Choy N."/>
            <person name="Enju A."/>
            <person name="Goldsmith A.D."/>
            <person name="Gurjal M."/>
            <person name="Hansen N.F."/>
            <person name="Hayashizaki Y."/>
            <person name="Johnson-Hopson C."/>
            <person name="Hsuan V.W."/>
            <person name="Iida K."/>
            <person name="Karnes M."/>
            <person name="Khan S."/>
            <person name="Koesema E."/>
            <person name="Ishida J."/>
            <person name="Jiang P.X."/>
            <person name="Jones T."/>
            <person name="Kawai J."/>
            <person name="Kamiya A."/>
            <person name="Meyers C."/>
            <person name="Nakajima M."/>
            <person name="Narusaka M."/>
            <person name="Seki M."/>
            <person name="Sakurai T."/>
            <person name="Satou M."/>
            <person name="Tamse R."/>
            <person name="Vaysberg M."/>
            <person name="Wallender E.K."/>
            <person name="Wong C."/>
            <person name="Yamamura Y."/>
            <person name="Yuan S."/>
            <person name="Shinozaki K."/>
            <person name="Davis R.W."/>
            <person name="Theologis A."/>
            <person name="Ecker J.R."/>
        </authorList>
    </citation>
    <scope>NUCLEOTIDE SEQUENCE [LARGE SCALE MRNA] (ISOFORMS 1 AND 2)</scope>
    <source>
        <strain>cv. Columbia</strain>
    </source>
</reference>
<reference key="4">
    <citation type="journal article" date="2005" name="Plant Physiol.">
        <title>Genome organization of more than 300 defensin-like genes in Arabidopsis.</title>
        <authorList>
            <person name="Silverstein K.A.T."/>
            <person name="Graham M.A."/>
            <person name="Paape T.D."/>
            <person name="VandenBosch K.A."/>
        </authorList>
    </citation>
    <scope>GENE FAMILY</scope>
</reference>
<gene>
    <name type="ordered locus">At4g22230</name>
    <name type="ORF">T10I14.60</name>
</gene>
<protein>
    <recommendedName>
        <fullName>Defensin-like protein 96</fullName>
    </recommendedName>
</protein>